<accession>A8I499</accession>
<accession>A1YRJ0</accession>
<comment type="function">
    <text evidence="1 2">Functions as a permease involved in the transport of the cationic amino acids (L-arginine, L-lysine, L-ornithine and L-homoarginine) (By similarity). May play a role in classical or alternative activation of macrophages via its role in arginine transport (By similarity).</text>
</comment>
<comment type="catalytic activity">
    <reaction evidence="1">
        <text>L-arginine(in) = L-arginine(out)</text>
        <dbReference type="Rhea" id="RHEA:32143"/>
        <dbReference type="ChEBI" id="CHEBI:32682"/>
    </reaction>
</comment>
<comment type="catalytic activity">
    <reaction evidence="1">
        <text>L-lysine(in) = L-lysine(out)</text>
        <dbReference type="Rhea" id="RHEA:70935"/>
        <dbReference type="ChEBI" id="CHEBI:32551"/>
    </reaction>
</comment>
<comment type="catalytic activity">
    <reaction evidence="1">
        <text>L-ornithine(in) = L-ornithine(out)</text>
        <dbReference type="Rhea" id="RHEA:71199"/>
        <dbReference type="ChEBI" id="CHEBI:46911"/>
    </reaction>
</comment>
<comment type="catalytic activity">
    <reaction evidence="2">
        <text>L-homoarginine(in) = L-homoarginine(out)</text>
        <dbReference type="Rhea" id="RHEA:71203"/>
        <dbReference type="ChEBI" id="CHEBI:143006"/>
    </reaction>
</comment>
<comment type="subcellular location">
    <subcellularLocation>
        <location evidence="1">Cell membrane</location>
        <topology evidence="1">Multi-pass membrane protein</topology>
    </subcellularLocation>
</comment>
<comment type="similarity">
    <text evidence="4">Belongs to the amino acid-polyamine-organocation (APC) superfamily. Cationic amino acid transporter (CAT) (TC 2.A.3.3) family.</text>
</comment>
<sequence length="657" mass="71458">MIPCRATLSFARCLIRRKVVTLDSLEDSKLCRCLSTMDLIALGVGSTLGAGVYVLAGEVAKADSGPSIVVSFLIAALASVMAGLCYAEFGARVPKTGSAYLYTYVTVGELWAFITGWNLILSYVIGTSSVARAWSGTLDELLNKQIGQFFRTYFKMNYTGLAEYPDFSAVCLILLLAGLLSFGVKESAWVNKVFTAVNILVLLFVMVAGFVKGNVANRKISEEFLKNISASAREPPSENGTSIYGAGGFMPYGFTGTLAGAATCFYAFVGFDCIATTGEEVRNPQKAIPIGIVTSLLVCFMAYFGVSAALTLMMPYYVLDEKSPLPVAFEYVGWGPAKYVVAAGSLCALSTSLLGSMFPLPRILFAMARDGLLFRFLARVSKRQSPVAATLTAGVISAVMAFLFDLKALVDMMSIGTLLAYSLVAACVLILRYQPGLSYEQPKYCPEKEALGSCASAASKSKSQVTVLPEWGFSLRAFFSPSLLPTKQSASLVSFLVGFLAFLILGLSILTTYGVHAIARLEAWSLALLVLFLVLCVAVVLTIWRQPQNQQKVAFMVPFLPFLPAFSILVNIYLMVQLSADTWIRFSIWMALGFLIYFAYGIRHSLEGNSRDEDEDEDTHSNNVHTAAEEKSAIQANDHHQRHLSLPFIFHEKTSEC</sequence>
<gene>
    <name type="primary">SLC7A2</name>
    <name type="synonym">ATRC2</name>
</gene>
<evidence type="ECO:0000250" key="1">
    <source>
        <dbReference type="UniProtKB" id="P18581"/>
    </source>
</evidence>
<evidence type="ECO:0000250" key="2">
    <source>
        <dbReference type="UniProtKB" id="P52569"/>
    </source>
</evidence>
<evidence type="ECO:0000255" key="3"/>
<evidence type="ECO:0000305" key="4"/>
<reference key="1">
    <citation type="submission" date="2007-09" db="EMBL/GenBank/DDBJ databases">
        <authorList>
            <person name="Zhi A.M."/>
            <person name="Feng D.Y."/>
            <person name="Huang Z.Y."/>
            <person name="Zou S.G."/>
            <person name="Zuo J.J."/>
        </authorList>
    </citation>
    <scope>NUCLEOTIDE SEQUENCE [MRNA]</scope>
</reference>
<reference key="2">
    <citation type="submission" date="2006-11" db="EMBL/GenBank/DDBJ databases">
        <authorList>
            <person name="Zhang Y."/>
            <person name="Zhou X.Y."/>
            <person name="Feng D.Y."/>
        </authorList>
    </citation>
    <scope>NUCLEOTIDE SEQUENCE [MRNA] OF 13-657</scope>
</reference>
<proteinExistence type="evidence at transcript level"/>
<protein>
    <recommendedName>
        <fullName>Cationic amino acid transporter 2</fullName>
        <shortName>CAT-2</shortName>
        <shortName>CAT2</shortName>
    </recommendedName>
    <alternativeName>
        <fullName>Low affinity cationic amino acid transporter 2</fullName>
    </alternativeName>
    <alternativeName>
        <fullName>Solute carrier family 7 member 2</fullName>
    </alternativeName>
</protein>
<name>CTR2_PIG</name>
<keyword id="KW-0029">Amino-acid transport</keyword>
<keyword id="KW-1003">Cell membrane</keyword>
<keyword id="KW-0325">Glycoprotein</keyword>
<keyword id="KW-0472">Membrane</keyword>
<keyword id="KW-0597">Phosphoprotein</keyword>
<keyword id="KW-1185">Reference proteome</keyword>
<keyword id="KW-0812">Transmembrane</keyword>
<keyword id="KW-1133">Transmembrane helix</keyword>
<keyword id="KW-0813">Transport</keyword>
<feature type="chain" id="PRO_0000375226" description="Cationic amino acid transporter 2">
    <location>
        <begin position="1"/>
        <end position="657"/>
    </location>
</feature>
<feature type="topological domain" description="Cytoplasmic" evidence="3">
    <location>
        <begin position="1"/>
        <end position="38"/>
    </location>
</feature>
<feature type="transmembrane region" description="Helical" evidence="3">
    <location>
        <begin position="39"/>
        <end position="59"/>
    </location>
</feature>
<feature type="topological domain" description="Extracellular" evidence="3">
    <location>
        <begin position="60"/>
        <end position="66"/>
    </location>
</feature>
<feature type="transmembrane region" description="Helical" evidence="3">
    <location>
        <begin position="67"/>
        <end position="87"/>
    </location>
</feature>
<feature type="topological domain" description="Cytoplasmic" evidence="3">
    <location>
        <begin position="88"/>
        <end position="104"/>
    </location>
</feature>
<feature type="transmembrane region" description="Helical" evidence="3">
    <location>
        <begin position="105"/>
        <end position="125"/>
    </location>
</feature>
<feature type="topological domain" description="Extracellular" evidence="3">
    <location>
        <begin position="126"/>
        <end position="163"/>
    </location>
</feature>
<feature type="transmembrane region" description="Helical" evidence="3">
    <location>
        <begin position="164"/>
        <end position="184"/>
    </location>
</feature>
<feature type="topological domain" description="Cytoplasmic" evidence="3">
    <location>
        <begin position="185"/>
        <end position="192"/>
    </location>
</feature>
<feature type="transmembrane region" description="Helical" evidence="3">
    <location>
        <begin position="193"/>
        <end position="213"/>
    </location>
</feature>
<feature type="topological domain" description="Extracellular" evidence="3">
    <location>
        <begin position="214"/>
        <end position="248"/>
    </location>
</feature>
<feature type="transmembrane region" description="Helical" evidence="3">
    <location>
        <begin position="249"/>
        <end position="269"/>
    </location>
</feature>
<feature type="topological domain" description="Cytoplasmic" evidence="3">
    <location>
        <begin position="270"/>
        <end position="289"/>
    </location>
</feature>
<feature type="transmembrane region" description="Helical" evidence="3">
    <location>
        <begin position="290"/>
        <end position="310"/>
    </location>
</feature>
<feature type="topological domain" description="Extracellular" evidence="3">
    <location>
        <begin position="311"/>
        <end position="339"/>
    </location>
</feature>
<feature type="transmembrane region" description="Helical" evidence="3">
    <location>
        <begin position="340"/>
        <end position="360"/>
    </location>
</feature>
<feature type="topological domain" description="Cytoplasmic" evidence="3">
    <location>
        <begin position="361"/>
        <end position="385"/>
    </location>
</feature>
<feature type="transmembrane region" description="Helical" evidence="3">
    <location>
        <begin position="386"/>
        <end position="406"/>
    </location>
</feature>
<feature type="topological domain" description="Extracellular" evidence="3">
    <location>
        <begin position="407"/>
        <end position="409"/>
    </location>
</feature>
<feature type="transmembrane region" description="Helical" evidence="3">
    <location>
        <begin position="410"/>
        <end position="430"/>
    </location>
</feature>
<feature type="topological domain" description="Cytoplasmic" evidence="3">
    <location>
        <begin position="431"/>
        <end position="489"/>
    </location>
</feature>
<feature type="transmembrane region" description="Helical" evidence="3">
    <location>
        <begin position="490"/>
        <end position="510"/>
    </location>
</feature>
<feature type="topological domain" description="Extracellular" evidence="3">
    <location>
        <begin position="511"/>
        <end position="523"/>
    </location>
</feature>
<feature type="transmembrane region" description="Helical" evidence="3">
    <location>
        <begin position="524"/>
        <end position="544"/>
    </location>
</feature>
<feature type="topological domain" description="Cytoplasmic" evidence="3">
    <location>
        <begin position="545"/>
        <end position="554"/>
    </location>
</feature>
<feature type="transmembrane region" description="Helical" evidence="3">
    <location>
        <begin position="555"/>
        <end position="575"/>
    </location>
</feature>
<feature type="topological domain" description="Extracellular" evidence="3">
    <location>
        <begin position="576"/>
        <end position="581"/>
    </location>
</feature>
<feature type="transmembrane region" description="Helical" evidence="3">
    <location>
        <begin position="582"/>
        <end position="602"/>
    </location>
</feature>
<feature type="topological domain" description="Cytoplasmic" evidence="3">
    <location>
        <begin position="603"/>
        <end position="657"/>
    </location>
</feature>
<feature type="modified residue" description="Phosphoserine" evidence="2">
    <location>
        <position position="24"/>
    </location>
</feature>
<feature type="modified residue" description="Phosphoserine" evidence="2">
    <location>
        <position position="463"/>
    </location>
</feature>
<feature type="modified residue" description="Phosphoserine" evidence="2">
    <location>
        <position position="645"/>
    </location>
</feature>
<feature type="glycosylation site" description="N-linked (GlcNAc...) asparagine" evidence="3">
    <location>
        <position position="157"/>
    </location>
</feature>
<feature type="glycosylation site" description="N-linked (GlcNAc...) asparagine" evidence="3">
    <location>
        <position position="227"/>
    </location>
</feature>
<feature type="glycosylation site" description="N-linked (GlcNAc...) asparagine" evidence="3">
    <location>
        <position position="239"/>
    </location>
</feature>
<feature type="sequence conflict" description="In Ref. 2; ABL75272." evidence="4" ref="2">
    <original>V</original>
    <variation>I</variation>
    <location>
        <position position="19"/>
    </location>
</feature>
<organism>
    <name type="scientific">Sus scrofa</name>
    <name type="common">Pig</name>
    <dbReference type="NCBI Taxonomy" id="9823"/>
    <lineage>
        <taxon>Eukaryota</taxon>
        <taxon>Metazoa</taxon>
        <taxon>Chordata</taxon>
        <taxon>Craniata</taxon>
        <taxon>Vertebrata</taxon>
        <taxon>Euteleostomi</taxon>
        <taxon>Mammalia</taxon>
        <taxon>Eutheria</taxon>
        <taxon>Laurasiatheria</taxon>
        <taxon>Artiodactyla</taxon>
        <taxon>Suina</taxon>
        <taxon>Suidae</taxon>
        <taxon>Sus</taxon>
    </lineage>
</organism>
<dbReference type="EMBL" id="EU155140">
    <property type="protein sequence ID" value="ABV80234.1"/>
    <property type="molecule type" value="mRNA"/>
</dbReference>
<dbReference type="EMBL" id="EF125869">
    <property type="protein sequence ID" value="ABL75272.1"/>
    <property type="molecule type" value="mRNA"/>
</dbReference>
<dbReference type="RefSeq" id="NP_001103890.1">
    <property type="nucleotide sequence ID" value="NM_001110420.1"/>
</dbReference>
<dbReference type="SMR" id="A8I499"/>
<dbReference type="FunCoup" id="A8I499">
    <property type="interactions" value="57"/>
</dbReference>
<dbReference type="STRING" id="9823.ENSSSCP00000055735"/>
<dbReference type="GlyCosmos" id="A8I499">
    <property type="glycosylation" value="3 sites, No reported glycans"/>
</dbReference>
<dbReference type="GlyGen" id="A8I499">
    <property type="glycosylation" value="4 sites"/>
</dbReference>
<dbReference type="PaxDb" id="9823-ENSSSCP00000007445"/>
<dbReference type="GeneID" id="100037298"/>
<dbReference type="KEGG" id="ssc:100037298"/>
<dbReference type="CTD" id="6542"/>
<dbReference type="eggNOG" id="KOG1286">
    <property type="taxonomic scope" value="Eukaryota"/>
</dbReference>
<dbReference type="InParanoid" id="A8I499"/>
<dbReference type="OrthoDB" id="3900342at2759"/>
<dbReference type="Proteomes" id="UP000008227">
    <property type="component" value="Unplaced"/>
</dbReference>
<dbReference type="Proteomes" id="UP000314985">
    <property type="component" value="Unplaced"/>
</dbReference>
<dbReference type="Proteomes" id="UP000694570">
    <property type="component" value="Unplaced"/>
</dbReference>
<dbReference type="Proteomes" id="UP000694571">
    <property type="component" value="Unplaced"/>
</dbReference>
<dbReference type="Proteomes" id="UP000694720">
    <property type="component" value="Unplaced"/>
</dbReference>
<dbReference type="Proteomes" id="UP000694722">
    <property type="component" value="Unplaced"/>
</dbReference>
<dbReference type="Proteomes" id="UP000694723">
    <property type="component" value="Unplaced"/>
</dbReference>
<dbReference type="Proteomes" id="UP000694724">
    <property type="component" value="Unplaced"/>
</dbReference>
<dbReference type="Proteomes" id="UP000694725">
    <property type="component" value="Unplaced"/>
</dbReference>
<dbReference type="Proteomes" id="UP000694726">
    <property type="component" value="Unplaced"/>
</dbReference>
<dbReference type="Proteomes" id="UP000694727">
    <property type="component" value="Unplaced"/>
</dbReference>
<dbReference type="Proteomes" id="UP000694728">
    <property type="component" value="Unplaced"/>
</dbReference>
<dbReference type="GO" id="GO:0005886">
    <property type="term" value="C:plasma membrane"/>
    <property type="evidence" value="ECO:0000318"/>
    <property type="project" value="GO_Central"/>
</dbReference>
<dbReference type="GO" id="GO:0061459">
    <property type="term" value="F:L-arginine transmembrane transporter activity"/>
    <property type="evidence" value="ECO:0000318"/>
    <property type="project" value="GO_Central"/>
</dbReference>
<dbReference type="GO" id="GO:0015189">
    <property type="term" value="F:L-lysine transmembrane transporter activity"/>
    <property type="evidence" value="ECO:0000318"/>
    <property type="project" value="GO_Central"/>
</dbReference>
<dbReference type="GO" id="GO:0000064">
    <property type="term" value="F:L-ornithine transmembrane transporter activity"/>
    <property type="evidence" value="ECO:0000318"/>
    <property type="project" value="GO_Central"/>
</dbReference>
<dbReference type="GO" id="GO:0097638">
    <property type="term" value="P:L-arginine import across plasma membrane"/>
    <property type="evidence" value="ECO:0000318"/>
    <property type="project" value="GO_Central"/>
</dbReference>
<dbReference type="GO" id="GO:1903826">
    <property type="term" value="P:L-arginine transmembrane transport"/>
    <property type="evidence" value="ECO:0000250"/>
    <property type="project" value="UniProtKB"/>
</dbReference>
<dbReference type="GO" id="GO:1903352">
    <property type="term" value="P:L-ornithine transmembrane transport"/>
    <property type="evidence" value="ECO:0000318"/>
    <property type="project" value="GO_Central"/>
</dbReference>
<dbReference type="FunFam" id="1.20.1740.10:FF:000034">
    <property type="entry name" value="cationic amino acid transporter 2 isoform X2"/>
    <property type="match status" value="1"/>
</dbReference>
<dbReference type="FunFam" id="1.20.1740.10:FF:000009">
    <property type="entry name" value="Low affinity cationic amino acid transporter 2"/>
    <property type="match status" value="1"/>
</dbReference>
<dbReference type="Gene3D" id="1.20.1740.10">
    <property type="entry name" value="Amino acid/polyamine transporter I"/>
    <property type="match status" value="2"/>
</dbReference>
<dbReference type="InterPro" id="IPR002293">
    <property type="entry name" value="AA/rel_permease1"/>
</dbReference>
<dbReference type="InterPro" id="IPR004755">
    <property type="entry name" value="Cat_AA_permease"/>
</dbReference>
<dbReference type="InterPro" id="IPR029485">
    <property type="entry name" value="CAT_C"/>
</dbReference>
<dbReference type="NCBIfam" id="TIGR00906">
    <property type="entry name" value="2A0303"/>
    <property type="match status" value="1"/>
</dbReference>
<dbReference type="PANTHER" id="PTHR43243:SF94">
    <property type="entry name" value="CATIONIC AMINO ACID TRANSPORTER 2"/>
    <property type="match status" value="1"/>
</dbReference>
<dbReference type="PANTHER" id="PTHR43243">
    <property type="entry name" value="INNER MEMBRANE TRANSPORTER YGJI-RELATED"/>
    <property type="match status" value="1"/>
</dbReference>
<dbReference type="Pfam" id="PF13520">
    <property type="entry name" value="AA_permease_2"/>
    <property type="match status" value="1"/>
</dbReference>
<dbReference type="Pfam" id="PF13906">
    <property type="entry name" value="AA_permease_C"/>
    <property type="match status" value="1"/>
</dbReference>